<keyword id="KW-0687">Ribonucleoprotein</keyword>
<keyword id="KW-0689">Ribosomal protein</keyword>
<evidence type="ECO:0000255" key="1">
    <source>
        <dbReference type="HAMAP-Rule" id="MF_00358"/>
    </source>
</evidence>
<evidence type="ECO:0000256" key="2">
    <source>
        <dbReference type="SAM" id="MobiDB-lite"/>
    </source>
</evidence>
<evidence type="ECO:0000305" key="3"/>
<comment type="similarity">
    <text evidence="1">Belongs to the bacterial ribosomal protein bS21 family.</text>
</comment>
<dbReference type="EMBL" id="CP000438">
    <property type="protein sequence ID" value="ABJ15543.1"/>
    <property type="molecule type" value="Genomic_DNA"/>
</dbReference>
<dbReference type="RefSeq" id="WP_003085057.1">
    <property type="nucleotide sequence ID" value="NZ_CP034244.1"/>
</dbReference>
<dbReference type="SMR" id="Q02TI4"/>
<dbReference type="GeneID" id="88187573"/>
<dbReference type="KEGG" id="pau:PA14_07560"/>
<dbReference type="PseudoCAP" id="PA14_07560"/>
<dbReference type="HOGENOM" id="CLU_159258_1_0_6"/>
<dbReference type="BioCyc" id="PAER208963:G1G74-624-MONOMER"/>
<dbReference type="Proteomes" id="UP000000653">
    <property type="component" value="Chromosome"/>
</dbReference>
<dbReference type="GO" id="GO:1990904">
    <property type="term" value="C:ribonucleoprotein complex"/>
    <property type="evidence" value="ECO:0007669"/>
    <property type="project" value="UniProtKB-KW"/>
</dbReference>
<dbReference type="GO" id="GO:0005840">
    <property type="term" value="C:ribosome"/>
    <property type="evidence" value="ECO:0007669"/>
    <property type="project" value="UniProtKB-KW"/>
</dbReference>
<dbReference type="GO" id="GO:0003735">
    <property type="term" value="F:structural constituent of ribosome"/>
    <property type="evidence" value="ECO:0007669"/>
    <property type="project" value="InterPro"/>
</dbReference>
<dbReference type="GO" id="GO:0006412">
    <property type="term" value="P:translation"/>
    <property type="evidence" value="ECO:0007669"/>
    <property type="project" value="UniProtKB-UniRule"/>
</dbReference>
<dbReference type="Gene3D" id="1.20.5.1150">
    <property type="entry name" value="Ribosomal protein S8"/>
    <property type="match status" value="1"/>
</dbReference>
<dbReference type="HAMAP" id="MF_00358">
    <property type="entry name" value="Ribosomal_bS21"/>
    <property type="match status" value="1"/>
</dbReference>
<dbReference type="InterPro" id="IPR001911">
    <property type="entry name" value="Ribosomal_bS21"/>
</dbReference>
<dbReference type="InterPro" id="IPR018278">
    <property type="entry name" value="Ribosomal_bS21_CS"/>
</dbReference>
<dbReference type="InterPro" id="IPR038380">
    <property type="entry name" value="Ribosomal_bS21_sf"/>
</dbReference>
<dbReference type="NCBIfam" id="TIGR00030">
    <property type="entry name" value="S21p"/>
    <property type="match status" value="1"/>
</dbReference>
<dbReference type="PANTHER" id="PTHR21109">
    <property type="entry name" value="MITOCHONDRIAL 28S RIBOSOMAL PROTEIN S21"/>
    <property type="match status" value="1"/>
</dbReference>
<dbReference type="PANTHER" id="PTHR21109:SF22">
    <property type="entry name" value="SMALL RIBOSOMAL SUBUNIT PROTEIN BS21"/>
    <property type="match status" value="1"/>
</dbReference>
<dbReference type="Pfam" id="PF01165">
    <property type="entry name" value="Ribosomal_S21"/>
    <property type="match status" value="1"/>
</dbReference>
<dbReference type="PRINTS" id="PR00976">
    <property type="entry name" value="RIBOSOMALS21"/>
</dbReference>
<dbReference type="PROSITE" id="PS01181">
    <property type="entry name" value="RIBOSOMAL_S21"/>
    <property type="match status" value="1"/>
</dbReference>
<proteinExistence type="inferred from homology"/>
<feature type="chain" id="PRO_1000005155" description="Small ribosomal subunit protein bS21">
    <location>
        <begin position="1"/>
        <end position="71"/>
    </location>
</feature>
<feature type="region of interest" description="Disordered" evidence="2">
    <location>
        <begin position="48"/>
        <end position="71"/>
    </location>
</feature>
<feature type="compositionally biased region" description="Basic residues" evidence="2">
    <location>
        <begin position="48"/>
        <end position="59"/>
    </location>
</feature>
<feature type="compositionally biased region" description="Basic and acidic residues" evidence="2">
    <location>
        <begin position="60"/>
        <end position="71"/>
    </location>
</feature>
<protein>
    <recommendedName>
        <fullName evidence="1">Small ribosomal subunit protein bS21</fullName>
    </recommendedName>
    <alternativeName>
        <fullName evidence="3">30S ribosomal protein S21</fullName>
    </alternativeName>
</protein>
<sequence>MPAVKVKENEPFDVALRRFKRSCEKAGVLAEVRSREFYEKPTAERKRKAAAAVKRHAKKVQREQRRRERLY</sequence>
<accession>Q02TI4</accession>
<name>RS21_PSEAB</name>
<organism>
    <name type="scientific">Pseudomonas aeruginosa (strain UCBPP-PA14)</name>
    <dbReference type="NCBI Taxonomy" id="208963"/>
    <lineage>
        <taxon>Bacteria</taxon>
        <taxon>Pseudomonadati</taxon>
        <taxon>Pseudomonadota</taxon>
        <taxon>Gammaproteobacteria</taxon>
        <taxon>Pseudomonadales</taxon>
        <taxon>Pseudomonadaceae</taxon>
        <taxon>Pseudomonas</taxon>
    </lineage>
</organism>
<reference key="1">
    <citation type="journal article" date="2006" name="Genome Biol.">
        <title>Genomic analysis reveals that Pseudomonas aeruginosa virulence is combinatorial.</title>
        <authorList>
            <person name="Lee D.G."/>
            <person name="Urbach J.M."/>
            <person name="Wu G."/>
            <person name="Liberati N.T."/>
            <person name="Feinbaum R.L."/>
            <person name="Miyata S."/>
            <person name="Diggins L.T."/>
            <person name="He J."/>
            <person name="Saucier M."/>
            <person name="Deziel E."/>
            <person name="Friedman L."/>
            <person name="Li L."/>
            <person name="Grills G."/>
            <person name="Montgomery K."/>
            <person name="Kucherlapati R."/>
            <person name="Rahme L.G."/>
            <person name="Ausubel F.M."/>
        </authorList>
    </citation>
    <scope>NUCLEOTIDE SEQUENCE [LARGE SCALE GENOMIC DNA]</scope>
    <source>
        <strain>UCBPP-PA14</strain>
    </source>
</reference>
<gene>
    <name evidence="1" type="primary">rpsU</name>
    <name type="ordered locus">PA14_07560</name>
</gene>